<feature type="chain" id="PRO_1000115496" description="Trigger factor">
    <location>
        <begin position="1"/>
        <end position="433"/>
    </location>
</feature>
<feature type="domain" description="PPIase FKBP-type" evidence="1">
    <location>
        <begin position="161"/>
        <end position="246"/>
    </location>
</feature>
<accession>B0BRA0</accession>
<name>TIG_ACTPJ</name>
<comment type="function">
    <text evidence="1">Involved in protein export. Acts as a chaperone by maintaining the newly synthesized protein in an open conformation. Functions as a peptidyl-prolyl cis-trans isomerase.</text>
</comment>
<comment type="catalytic activity">
    <reaction evidence="1">
        <text>[protein]-peptidylproline (omega=180) = [protein]-peptidylproline (omega=0)</text>
        <dbReference type="Rhea" id="RHEA:16237"/>
        <dbReference type="Rhea" id="RHEA-COMP:10747"/>
        <dbReference type="Rhea" id="RHEA-COMP:10748"/>
        <dbReference type="ChEBI" id="CHEBI:83833"/>
        <dbReference type="ChEBI" id="CHEBI:83834"/>
        <dbReference type="EC" id="5.2.1.8"/>
    </reaction>
</comment>
<comment type="subcellular location">
    <subcellularLocation>
        <location>Cytoplasm</location>
    </subcellularLocation>
    <text evidence="1">About half TF is bound to the ribosome near the polypeptide exit tunnel while the other half is free in the cytoplasm.</text>
</comment>
<comment type="domain">
    <text evidence="1">Consists of 3 domains; the N-terminus binds the ribosome, the middle domain has PPIase activity, while the C-terminus has intrinsic chaperone activity on its own.</text>
</comment>
<comment type="similarity">
    <text evidence="1">Belongs to the FKBP-type PPIase family. Tig subfamily.</text>
</comment>
<sequence length="433" mass="48024">MSISIETLEGLQRRVTITVAADKIEAAYKEQLKGYAKNARVDGFRKGKVPHAIIEQRFGLAARQDVLSDEMQRAFFDAVIAEKINLAGRPTFTPNNYQPSQEFSFTATFEVFPEVELKGLENIEVEKPVVEITEADLDKMIDVLRKQQATWAESQAAAQAEDRVVIDFVGSVDGEEFEGGKATDFTLAMGQSRMIPGFEEGIVGHKAGEQFDIDVTFPEEYHAENLKGKAAKFAITLKKVENIVLPELTEEFVKKFGSAKTVEDLRAEIKKNMQRELKNAVTARVKNQVINGLIAQNEIEVPAAAVAEEVDVLRRQAVQRFGGKPEMAAQLPAELFEADAKRRVQVGLLLSTVIGTNELKVDEKRVEETIAEIASAYEQPAEVVAHYAKNRQLTENIRNVVLEEQAVEVVLAKAKVTEKATSFDEVMAQQAQG</sequence>
<evidence type="ECO:0000255" key="1">
    <source>
        <dbReference type="HAMAP-Rule" id="MF_00303"/>
    </source>
</evidence>
<organism>
    <name type="scientific">Actinobacillus pleuropneumoniae serotype 3 (strain JL03)</name>
    <dbReference type="NCBI Taxonomy" id="434271"/>
    <lineage>
        <taxon>Bacteria</taxon>
        <taxon>Pseudomonadati</taxon>
        <taxon>Pseudomonadota</taxon>
        <taxon>Gammaproteobacteria</taxon>
        <taxon>Pasteurellales</taxon>
        <taxon>Pasteurellaceae</taxon>
        <taxon>Actinobacillus</taxon>
    </lineage>
</organism>
<proteinExistence type="inferred from homology"/>
<protein>
    <recommendedName>
        <fullName evidence="1">Trigger factor</fullName>
        <shortName evidence="1">TF</shortName>
        <ecNumber evidence="1">5.2.1.8</ecNumber>
    </recommendedName>
    <alternativeName>
        <fullName evidence="1">PPIase</fullName>
    </alternativeName>
</protein>
<reference key="1">
    <citation type="journal article" date="2008" name="PLoS ONE">
        <title>Genome biology of Actinobacillus pleuropneumoniae JL03, an isolate of serotype 3 prevalent in China.</title>
        <authorList>
            <person name="Xu Z."/>
            <person name="Zhou Y."/>
            <person name="Li L."/>
            <person name="Zhou R."/>
            <person name="Xiao S."/>
            <person name="Wan Y."/>
            <person name="Zhang S."/>
            <person name="Wang K."/>
            <person name="Li W."/>
            <person name="Li L."/>
            <person name="Jin H."/>
            <person name="Kang M."/>
            <person name="Dalai B."/>
            <person name="Li T."/>
            <person name="Liu L."/>
            <person name="Cheng Y."/>
            <person name="Zhang L."/>
            <person name="Xu T."/>
            <person name="Zheng H."/>
            <person name="Pu S."/>
            <person name="Wang B."/>
            <person name="Gu W."/>
            <person name="Zhang X.L."/>
            <person name="Zhu G.-F."/>
            <person name="Wang S."/>
            <person name="Zhao G.-P."/>
            <person name="Chen H."/>
        </authorList>
    </citation>
    <scope>NUCLEOTIDE SEQUENCE [LARGE SCALE GENOMIC DNA]</scope>
    <source>
        <strain>JL03</strain>
    </source>
</reference>
<keyword id="KW-0131">Cell cycle</keyword>
<keyword id="KW-0132">Cell division</keyword>
<keyword id="KW-0143">Chaperone</keyword>
<keyword id="KW-0963">Cytoplasm</keyword>
<keyword id="KW-0413">Isomerase</keyword>
<keyword id="KW-0697">Rotamase</keyword>
<dbReference type="EC" id="5.2.1.8" evidence="1"/>
<dbReference type="EMBL" id="CP000687">
    <property type="protein sequence ID" value="ABY70085.1"/>
    <property type="molecule type" value="Genomic_DNA"/>
</dbReference>
<dbReference type="RefSeq" id="WP_005598766.1">
    <property type="nucleotide sequence ID" value="NC_010278.1"/>
</dbReference>
<dbReference type="SMR" id="B0BRA0"/>
<dbReference type="GeneID" id="48599773"/>
<dbReference type="KEGG" id="apj:APJL_1533"/>
<dbReference type="HOGENOM" id="CLU_033058_2_0_6"/>
<dbReference type="Proteomes" id="UP000008547">
    <property type="component" value="Chromosome"/>
</dbReference>
<dbReference type="GO" id="GO:0005737">
    <property type="term" value="C:cytoplasm"/>
    <property type="evidence" value="ECO:0007669"/>
    <property type="project" value="UniProtKB-SubCell"/>
</dbReference>
<dbReference type="GO" id="GO:0003755">
    <property type="term" value="F:peptidyl-prolyl cis-trans isomerase activity"/>
    <property type="evidence" value="ECO:0007669"/>
    <property type="project" value="UniProtKB-UniRule"/>
</dbReference>
<dbReference type="GO" id="GO:0044183">
    <property type="term" value="F:protein folding chaperone"/>
    <property type="evidence" value="ECO:0007669"/>
    <property type="project" value="TreeGrafter"/>
</dbReference>
<dbReference type="GO" id="GO:0043022">
    <property type="term" value="F:ribosome binding"/>
    <property type="evidence" value="ECO:0007669"/>
    <property type="project" value="TreeGrafter"/>
</dbReference>
<dbReference type="GO" id="GO:0051083">
    <property type="term" value="P:'de novo' cotranslational protein folding"/>
    <property type="evidence" value="ECO:0007669"/>
    <property type="project" value="TreeGrafter"/>
</dbReference>
<dbReference type="GO" id="GO:0051301">
    <property type="term" value="P:cell division"/>
    <property type="evidence" value="ECO:0007669"/>
    <property type="project" value="UniProtKB-KW"/>
</dbReference>
<dbReference type="GO" id="GO:0061077">
    <property type="term" value="P:chaperone-mediated protein folding"/>
    <property type="evidence" value="ECO:0007669"/>
    <property type="project" value="TreeGrafter"/>
</dbReference>
<dbReference type="GO" id="GO:0015031">
    <property type="term" value="P:protein transport"/>
    <property type="evidence" value="ECO:0007669"/>
    <property type="project" value="UniProtKB-UniRule"/>
</dbReference>
<dbReference type="GO" id="GO:0043335">
    <property type="term" value="P:protein unfolding"/>
    <property type="evidence" value="ECO:0007669"/>
    <property type="project" value="TreeGrafter"/>
</dbReference>
<dbReference type="FunFam" id="3.10.50.40:FF:000001">
    <property type="entry name" value="Trigger factor"/>
    <property type="match status" value="1"/>
</dbReference>
<dbReference type="Gene3D" id="3.10.50.40">
    <property type="match status" value="1"/>
</dbReference>
<dbReference type="Gene3D" id="3.30.70.1050">
    <property type="entry name" value="Trigger factor ribosome-binding domain"/>
    <property type="match status" value="1"/>
</dbReference>
<dbReference type="Gene3D" id="1.10.3120.10">
    <property type="entry name" value="Trigger factor, C-terminal domain"/>
    <property type="match status" value="1"/>
</dbReference>
<dbReference type="HAMAP" id="MF_00303">
    <property type="entry name" value="Trigger_factor_Tig"/>
    <property type="match status" value="1"/>
</dbReference>
<dbReference type="InterPro" id="IPR046357">
    <property type="entry name" value="PPIase_dom_sf"/>
</dbReference>
<dbReference type="InterPro" id="IPR001179">
    <property type="entry name" value="PPIase_FKBP_dom"/>
</dbReference>
<dbReference type="InterPro" id="IPR005215">
    <property type="entry name" value="Trig_fac"/>
</dbReference>
<dbReference type="InterPro" id="IPR008880">
    <property type="entry name" value="Trigger_fac_C"/>
</dbReference>
<dbReference type="InterPro" id="IPR037041">
    <property type="entry name" value="Trigger_fac_C_sf"/>
</dbReference>
<dbReference type="InterPro" id="IPR008881">
    <property type="entry name" value="Trigger_fac_ribosome-bd_bac"/>
</dbReference>
<dbReference type="InterPro" id="IPR036611">
    <property type="entry name" value="Trigger_fac_ribosome-bd_sf"/>
</dbReference>
<dbReference type="InterPro" id="IPR027304">
    <property type="entry name" value="Trigger_fact/SurA_dom_sf"/>
</dbReference>
<dbReference type="NCBIfam" id="TIGR00115">
    <property type="entry name" value="tig"/>
    <property type="match status" value="1"/>
</dbReference>
<dbReference type="PANTHER" id="PTHR30560">
    <property type="entry name" value="TRIGGER FACTOR CHAPERONE AND PEPTIDYL-PROLYL CIS/TRANS ISOMERASE"/>
    <property type="match status" value="1"/>
</dbReference>
<dbReference type="PANTHER" id="PTHR30560:SF3">
    <property type="entry name" value="TRIGGER FACTOR-LIKE PROTEIN TIG, CHLOROPLASTIC"/>
    <property type="match status" value="1"/>
</dbReference>
<dbReference type="Pfam" id="PF00254">
    <property type="entry name" value="FKBP_C"/>
    <property type="match status" value="1"/>
</dbReference>
<dbReference type="Pfam" id="PF05698">
    <property type="entry name" value="Trigger_C"/>
    <property type="match status" value="1"/>
</dbReference>
<dbReference type="Pfam" id="PF05697">
    <property type="entry name" value="Trigger_N"/>
    <property type="match status" value="1"/>
</dbReference>
<dbReference type="PIRSF" id="PIRSF003095">
    <property type="entry name" value="Trigger_factor"/>
    <property type="match status" value="1"/>
</dbReference>
<dbReference type="SUPFAM" id="SSF54534">
    <property type="entry name" value="FKBP-like"/>
    <property type="match status" value="1"/>
</dbReference>
<dbReference type="SUPFAM" id="SSF109998">
    <property type="entry name" value="Triger factor/SurA peptide-binding domain-like"/>
    <property type="match status" value="1"/>
</dbReference>
<dbReference type="SUPFAM" id="SSF102735">
    <property type="entry name" value="Trigger factor ribosome-binding domain"/>
    <property type="match status" value="1"/>
</dbReference>
<dbReference type="PROSITE" id="PS50059">
    <property type="entry name" value="FKBP_PPIASE"/>
    <property type="match status" value="1"/>
</dbReference>
<gene>
    <name evidence="1" type="primary">tig</name>
    <name type="ordered locus">APJL_1533</name>
</gene>